<protein>
    <recommendedName>
        <fullName evidence="1">4-hydroxy-3-methylbut-2-en-1-yl diphosphate synthase (ferredoxin)</fullName>
        <ecNumber evidence="1">1.17.7.1</ecNumber>
    </recommendedName>
    <alternativeName>
        <fullName evidence="1">1-hydroxy-2-methyl-2-(E)-butenyl 4-diphosphate synthase</fullName>
    </alternativeName>
</protein>
<organism>
    <name type="scientific">Prochlorococcus marinus (strain MIT 9313)</name>
    <dbReference type="NCBI Taxonomy" id="74547"/>
    <lineage>
        <taxon>Bacteria</taxon>
        <taxon>Bacillati</taxon>
        <taxon>Cyanobacteriota</taxon>
        <taxon>Cyanophyceae</taxon>
        <taxon>Synechococcales</taxon>
        <taxon>Prochlorococcaceae</taxon>
        <taxon>Prochlorococcus</taxon>
    </lineage>
</organism>
<name>ISPG_PROMM</name>
<accession>Q7V7G9</accession>
<gene>
    <name evidence="1" type="primary">ispG</name>
    <name type="synonym">gcpE</name>
    <name type="ordered locus">PMT_0777</name>
</gene>
<reference key="1">
    <citation type="journal article" date="2003" name="Nature">
        <title>Genome divergence in two Prochlorococcus ecotypes reflects oceanic niche differentiation.</title>
        <authorList>
            <person name="Rocap G."/>
            <person name="Larimer F.W."/>
            <person name="Lamerdin J.E."/>
            <person name="Malfatti S."/>
            <person name="Chain P."/>
            <person name="Ahlgren N.A."/>
            <person name="Arellano A."/>
            <person name="Coleman M."/>
            <person name="Hauser L."/>
            <person name="Hess W.R."/>
            <person name="Johnson Z.I."/>
            <person name="Land M.L."/>
            <person name="Lindell D."/>
            <person name="Post A.F."/>
            <person name="Regala W."/>
            <person name="Shah M."/>
            <person name="Shaw S.L."/>
            <person name="Steglich C."/>
            <person name="Sullivan M.B."/>
            <person name="Ting C.S."/>
            <person name="Tolonen A."/>
            <person name="Webb E.A."/>
            <person name="Zinser E.R."/>
            <person name="Chisholm S.W."/>
        </authorList>
    </citation>
    <scope>NUCLEOTIDE SEQUENCE [LARGE SCALE GENOMIC DNA]</scope>
    <source>
        <strain>MIT 9313</strain>
    </source>
</reference>
<keyword id="KW-0004">4Fe-4S</keyword>
<keyword id="KW-0408">Iron</keyword>
<keyword id="KW-0411">Iron-sulfur</keyword>
<keyword id="KW-0414">Isoprene biosynthesis</keyword>
<keyword id="KW-0479">Metal-binding</keyword>
<keyword id="KW-0560">Oxidoreductase</keyword>
<keyword id="KW-1185">Reference proteome</keyword>
<feature type="chain" id="PRO_0000190615" description="4-hydroxy-3-methylbut-2-en-1-yl diphosphate synthase (ferredoxin)">
    <location>
        <begin position="1"/>
        <end position="406"/>
    </location>
</feature>
<feature type="binding site" evidence="1">
    <location>
        <position position="314"/>
    </location>
    <ligand>
        <name>[4Fe-4S] cluster</name>
        <dbReference type="ChEBI" id="CHEBI:49883"/>
    </ligand>
</feature>
<feature type="binding site" evidence="1">
    <location>
        <position position="317"/>
    </location>
    <ligand>
        <name>[4Fe-4S] cluster</name>
        <dbReference type="ChEBI" id="CHEBI:49883"/>
    </ligand>
</feature>
<feature type="binding site" evidence="1">
    <location>
        <position position="348"/>
    </location>
    <ligand>
        <name>[4Fe-4S] cluster</name>
        <dbReference type="ChEBI" id="CHEBI:49883"/>
    </ligand>
</feature>
<feature type="binding site" evidence="1">
    <location>
        <position position="355"/>
    </location>
    <ligand>
        <name>[4Fe-4S] cluster</name>
        <dbReference type="ChEBI" id="CHEBI:49883"/>
    </ligand>
</feature>
<comment type="function">
    <text evidence="1">Converts 2C-methyl-D-erythritol 2,4-cyclodiphosphate (ME-2,4cPP) into 1-hydroxy-2-methyl-2-(E)-butenyl 4-diphosphate.</text>
</comment>
<comment type="catalytic activity">
    <reaction evidence="1">
        <text>(2E)-4-hydroxy-3-methylbut-2-enyl diphosphate + 2 oxidized [2Fe-2S]-[ferredoxin] + H2O = 2-C-methyl-D-erythritol 2,4-cyclic diphosphate + 2 reduced [2Fe-2S]-[ferredoxin] + H(+)</text>
        <dbReference type="Rhea" id="RHEA:26119"/>
        <dbReference type="Rhea" id="RHEA-COMP:10000"/>
        <dbReference type="Rhea" id="RHEA-COMP:10001"/>
        <dbReference type="ChEBI" id="CHEBI:15377"/>
        <dbReference type="ChEBI" id="CHEBI:15378"/>
        <dbReference type="ChEBI" id="CHEBI:33737"/>
        <dbReference type="ChEBI" id="CHEBI:33738"/>
        <dbReference type="ChEBI" id="CHEBI:58483"/>
        <dbReference type="ChEBI" id="CHEBI:128753"/>
        <dbReference type="EC" id="1.17.7.1"/>
    </reaction>
</comment>
<comment type="cofactor">
    <cofactor evidence="1">
        <name>[4Fe-4S] cluster</name>
        <dbReference type="ChEBI" id="CHEBI:49883"/>
    </cofactor>
    <text evidence="1">Binds 1 [4Fe-4S] cluster.</text>
</comment>
<comment type="pathway">
    <text evidence="1">Isoprenoid biosynthesis; isopentenyl diphosphate biosynthesis via DXP pathway; isopentenyl diphosphate from 1-deoxy-D-xylulose 5-phosphate: step 5/6.</text>
</comment>
<comment type="similarity">
    <text evidence="1">Belongs to the IspG family.</text>
</comment>
<proteinExistence type="inferred from homology"/>
<sequence>MSATMAEYQSSTSRRYDTQIHRRVTRTVNVGGVLIGSDHPVRVQSMINEDTLDVEGATAGIRRLHEAGCEIVRLTVPSLGHAKAVGEICQRLRETYQPVPLVADVHHNGMKIALEVANHVDKVRINPGLFVFDKADPDRTEFSGEEIASIRERIAENFEPLVTRLKQQDKALRIGVNHGSLAERMLFAYGDTPLGMVESAMEFVRICDSLDFHNIVISMKASRAPVMLAAYRLMADTMDQEGFNYPLHLGVTEAGDGDYGRIKSTAGIATLLAEGLGDTIRVSLTEAPEKEIPVCYSILQSIGLRKTMVEYISCPSCGRTLFNLEEVVQKVRDSTSHLVGLDIAVMGCIVNGPGEMADADYGYVGKGPGVISLYRGRDEIRKVSESEGVDALIQLIKDDGRWVDPP</sequence>
<dbReference type="EC" id="1.17.7.1" evidence="1"/>
<dbReference type="EMBL" id="BX548175">
    <property type="protein sequence ID" value="CAE20952.1"/>
    <property type="molecule type" value="Genomic_DNA"/>
</dbReference>
<dbReference type="RefSeq" id="WP_011130155.1">
    <property type="nucleotide sequence ID" value="NC_005071.1"/>
</dbReference>
<dbReference type="SMR" id="Q7V7G9"/>
<dbReference type="DNASU" id="1728361"/>
<dbReference type="KEGG" id="pmt:PMT_0777"/>
<dbReference type="eggNOG" id="COG0821">
    <property type="taxonomic scope" value="Bacteria"/>
</dbReference>
<dbReference type="HOGENOM" id="CLU_042258_0_0_3"/>
<dbReference type="OrthoDB" id="9803214at2"/>
<dbReference type="UniPathway" id="UPA00056">
    <property type="reaction ID" value="UER00096"/>
</dbReference>
<dbReference type="Proteomes" id="UP000001423">
    <property type="component" value="Chromosome"/>
</dbReference>
<dbReference type="GO" id="GO:0051539">
    <property type="term" value="F:4 iron, 4 sulfur cluster binding"/>
    <property type="evidence" value="ECO:0007669"/>
    <property type="project" value="UniProtKB-UniRule"/>
</dbReference>
<dbReference type="GO" id="GO:0046429">
    <property type="term" value="F:4-hydroxy-3-methylbut-2-en-1-yl diphosphate synthase activity (ferredoxin)"/>
    <property type="evidence" value="ECO:0007669"/>
    <property type="project" value="UniProtKB-UniRule"/>
</dbReference>
<dbReference type="GO" id="GO:0005506">
    <property type="term" value="F:iron ion binding"/>
    <property type="evidence" value="ECO:0007669"/>
    <property type="project" value="InterPro"/>
</dbReference>
<dbReference type="GO" id="GO:0019288">
    <property type="term" value="P:isopentenyl diphosphate biosynthetic process, methylerythritol 4-phosphate pathway"/>
    <property type="evidence" value="ECO:0007669"/>
    <property type="project" value="UniProtKB-UniRule"/>
</dbReference>
<dbReference type="GO" id="GO:0016114">
    <property type="term" value="P:terpenoid biosynthetic process"/>
    <property type="evidence" value="ECO:0007669"/>
    <property type="project" value="InterPro"/>
</dbReference>
<dbReference type="FunFam" id="3.20.20.20:FF:000005">
    <property type="entry name" value="4-hydroxy-3-methylbut-2-en-1-yl diphosphate synthase (flavodoxin)"/>
    <property type="match status" value="1"/>
</dbReference>
<dbReference type="FunFam" id="3.30.413.10:FF:000006">
    <property type="entry name" value="4-hydroxy-3-methylbut-2-en-1-yl diphosphate synthase (flavodoxin)"/>
    <property type="match status" value="1"/>
</dbReference>
<dbReference type="Gene3D" id="3.20.20.20">
    <property type="entry name" value="Dihydropteroate synthase-like"/>
    <property type="match status" value="1"/>
</dbReference>
<dbReference type="Gene3D" id="3.30.413.10">
    <property type="entry name" value="Sulfite Reductase Hemoprotein, domain 1"/>
    <property type="match status" value="1"/>
</dbReference>
<dbReference type="HAMAP" id="MF_00159">
    <property type="entry name" value="IspG"/>
    <property type="match status" value="1"/>
</dbReference>
<dbReference type="InterPro" id="IPR011005">
    <property type="entry name" value="Dihydropteroate_synth-like_sf"/>
</dbReference>
<dbReference type="InterPro" id="IPR016425">
    <property type="entry name" value="IspG_bac"/>
</dbReference>
<dbReference type="InterPro" id="IPR004588">
    <property type="entry name" value="IspG_bac-typ"/>
</dbReference>
<dbReference type="InterPro" id="IPR045854">
    <property type="entry name" value="NO2/SO3_Rdtase_4Fe4S_sf"/>
</dbReference>
<dbReference type="NCBIfam" id="TIGR00612">
    <property type="entry name" value="ispG_gcpE"/>
    <property type="match status" value="1"/>
</dbReference>
<dbReference type="NCBIfam" id="NF001540">
    <property type="entry name" value="PRK00366.1"/>
    <property type="match status" value="1"/>
</dbReference>
<dbReference type="PANTHER" id="PTHR30454">
    <property type="entry name" value="4-HYDROXY-3-METHYLBUT-2-EN-1-YL DIPHOSPHATE SYNTHASE"/>
    <property type="match status" value="1"/>
</dbReference>
<dbReference type="PANTHER" id="PTHR30454:SF0">
    <property type="entry name" value="4-HYDROXY-3-METHYLBUT-2-EN-1-YL DIPHOSPHATE SYNTHASE (FERREDOXIN), CHLOROPLASTIC"/>
    <property type="match status" value="1"/>
</dbReference>
<dbReference type="Pfam" id="PF04551">
    <property type="entry name" value="GcpE"/>
    <property type="match status" value="1"/>
</dbReference>
<dbReference type="PIRSF" id="PIRSF004640">
    <property type="entry name" value="IspG"/>
    <property type="match status" value="1"/>
</dbReference>
<dbReference type="SUPFAM" id="SSF56014">
    <property type="entry name" value="Nitrite and sulphite reductase 4Fe-4S domain-like"/>
    <property type="match status" value="1"/>
</dbReference>
<evidence type="ECO:0000255" key="1">
    <source>
        <dbReference type="HAMAP-Rule" id="MF_00159"/>
    </source>
</evidence>